<feature type="chain" id="PRO_1000118480" description="Methionyl-tRNA formyltransferase">
    <location>
        <begin position="1"/>
        <end position="315"/>
    </location>
</feature>
<feature type="binding site" evidence="1">
    <location>
        <begin position="113"/>
        <end position="116"/>
    </location>
    <ligand>
        <name>(6S)-5,6,7,8-tetrahydrofolate</name>
        <dbReference type="ChEBI" id="CHEBI:57453"/>
    </ligand>
</feature>
<reference key="1">
    <citation type="journal article" date="2008" name="J. Bacteriol.">
        <title>Insights into the environmental resistance gene pool from the genome sequence of the multidrug-resistant environmental isolate Escherichia coli SMS-3-5.</title>
        <authorList>
            <person name="Fricke W.F."/>
            <person name="Wright M.S."/>
            <person name="Lindell A.H."/>
            <person name="Harkins D.M."/>
            <person name="Baker-Austin C."/>
            <person name="Ravel J."/>
            <person name="Stepanauskas R."/>
        </authorList>
    </citation>
    <scope>NUCLEOTIDE SEQUENCE [LARGE SCALE GENOMIC DNA]</scope>
    <source>
        <strain>SMS-3-5 / SECEC</strain>
    </source>
</reference>
<protein>
    <recommendedName>
        <fullName evidence="1">Methionyl-tRNA formyltransferase</fullName>
        <ecNumber evidence="1">2.1.2.9</ecNumber>
    </recommendedName>
</protein>
<proteinExistence type="inferred from homology"/>
<evidence type="ECO:0000255" key="1">
    <source>
        <dbReference type="HAMAP-Rule" id="MF_00182"/>
    </source>
</evidence>
<keyword id="KW-0648">Protein biosynthesis</keyword>
<keyword id="KW-0808">Transferase</keyword>
<accession>B1LGP4</accession>
<comment type="function">
    <text evidence="1">Attaches a formyl group to the free amino group of methionyl-tRNA(fMet). The formyl group appears to play a dual role in the initiator identity of N-formylmethionyl-tRNA by promoting its recognition by IF2 and preventing the misappropriation of this tRNA by the elongation apparatus.</text>
</comment>
<comment type="catalytic activity">
    <reaction evidence="1">
        <text>L-methionyl-tRNA(fMet) + (6R)-10-formyltetrahydrofolate = N-formyl-L-methionyl-tRNA(fMet) + (6S)-5,6,7,8-tetrahydrofolate + H(+)</text>
        <dbReference type="Rhea" id="RHEA:24380"/>
        <dbReference type="Rhea" id="RHEA-COMP:9952"/>
        <dbReference type="Rhea" id="RHEA-COMP:9953"/>
        <dbReference type="ChEBI" id="CHEBI:15378"/>
        <dbReference type="ChEBI" id="CHEBI:57453"/>
        <dbReference type="ChEBI" id="CHEBI:78530"/>
        <dbReference type="ChEBI" id="CHEBI:78844"/>
        <dbReference type="ChEBI" id="CHEBI:195366"/>
        <dbReference type="EC" id="2.1.2.9"/>
    </reaction>
</comment>
<comment type="similarity">
    <text evidence="1">Belongs to the Fmt family.</text>
</comment>
<dbReference type="EC" id="2.1.2.9" evidence="1"/>
<dbReference type="EMBL" id="CP000970">
    <property type="protein sequence ID" value="ACB18645.1"/>
    <property type="molecule type" value="Genomic_DNA"/>
</dbReference>
<dbReference type="RefSeq" id="WP_000004468.1">
    <property type="nucleotide sequence ID" value="NC_010498.1"/>
</dbReference>
<dbReference type="SMR" id="B1LGP4"/>
<dbReference type="KEGG" id="ecm:EcSMS35_3583"/>
<dbReference type="HOGENOM" id="CLU_033347_1_2_6"/>
<dbReference type="Proteomes" id="UP000007011">
    <property type="component" value="Chromosome"/>
</dbReference>
<dbReference type="GO" id="GO:0005829">
    <property type="term" value="C:cytosol"/>
    <property type="evidence" value="ECO:0007669"/>
    <property type="project" value="TreeGrafter"/>
</dbReference>
<dbReference type="GO" id="GO:0004479">
    <property type="term" value="F:methionyl-tRNA formyltransferase activity"/>
    <property type="evidence" value="ECO:0007669"/>
    <property type="project" value="UniProtKB-UniRule"/>
</dbReference>
<dbReference type="CDD" id="cd08646">
    <property type="entry name" value="FMT_core_Met-tRNA-FMT_N"/>
    <property type="match status" value="1"/>
</dbReference>
<dbReference type="CDD" id="cd08704">
    <property type="entry name" value="Met_tRNA_FMT_C"/>
    <property type="match status" value="1"/>
</dbReference>
<dbReference type="FunFam" id="3.10.25.10:FF:000001">
    <property type="entry name" value="Methionyl-tRNA formyltransferase"/>
    <property type="match status" value="1"/>
</dbReference>
<dbReference type="FunFam" id="3.40.50.12230:FF:000001">
    <property type="entry name" value="Methionyl-tRNA formyltransferase"/>
    <property type="match status" value="1"/>
</dbReference>
<dbReference type="FunFam" id="3.40.50.170:FF:000003">
    <property type="entry name" value="Methionyl-tRNA formyltransferase"/>
    <property type="match status" value="1"/>
</dbReference>
<dbReference type="Gene3D" id="3.10.25.10">
    <property type="entry name" value="Formyl transferase, C-terminal domain"/>
    <property type="match status" value="1"/>
</dbReference>
<dbReference type="Gene3D" id="3.40.50.170">
    <property type="entry name" value="Formyl transferase, N-terminal domain"/>
    <property type="match status" value="1"/>
</dbReference>
<dbReference type="HAMAP" id="MF_00182">
    <property type="entry name" value="Formyl_trans"/>
    <property type="match status" value="1"/>
</dbReference>
<dbReference type="InterPro" id="IPR005794">
    <property type="entry name" value="Fmt"/>
</dbReference>
<dbReference type="InterPro" id="IPR005793">
    <property type="entry name" value="Formyl_trans_C"/>
</dbReference>
<dbReference type="InterPro" id="IPR037022">
    <property type="entry name" value="Formyl_trans_C_sf"/>
</dbReference>
<dbReference type="InterPro" id="IPR002376">
    <property type="entry name" value="Formyl_transf_N"/>
</dbReference>
<dbReference type="InterPro" id="IPR036477">
    <property type="entry name" value="Formyl_transf_N_sf"/>
</dbReference>
<dbReference type="InterPro" id="IPR011034">
    <property type="entry name" value="Formyl_transferase-like_C_sf"/>
</dbReference>
<dbReference type="InterPro" id="IPR001555">
    <property type="entry name" value="GART_AS"/>
</dbReference>
<dbReference type="InterPro" id="IPR044135">
    <property type="entry name" value="Met-tRNA-FMT_C"/>
</dbReference>
<dbReference type="InterPro" id="IPR041711">
    <property type="entry name" value="Met-tRNA-FMT_N"/>
</dbReference>
<dbReference type="NCBIfam" id="TIGR00460">
    <property type="entry name" value="fmt"/>
    <property type="match status" value="1"/>
</dbReference>
<dbReference type="PANTHER" id="PTHR11138">
    <property type="entry name" value="METHIONYL-TRNA FORMYLTRANSFERASE"/>
    <property type="match status" value="1"/>
</dbReference>
<dbReference type="PANTHER" id="PTHR11138:SF5">
    <property type="entry name" value="METHIONYL-TRNA FORMYLTRANSFERASE, MITOCHONDRIAL"/>
    <property type="match status" value="1"/>
</dbReference>
<dbReference type="Pfam" id="PF02911">
    <property type="entry name" value="Formyl_trans_C"/>
    <property type="match status" value="1"/>
</dbReference>
<dbReference type="Pfam" id="PF00551">
    <property type="entry name" value="Formyl_trans_N"/>
    <property type="match status" value="1"/>
</dbReference>
<dbReference type="SUPFAM" id="SSF50486">
    <property type="entry name" value="FMT C-terminal domain-like"/>
    <property type="match status" value="1"/>
</dbReference>
<dbReference type="SUPFAM" id="SSF53328">
    <property type="entry name" value="Formyltransferase"/>
    <property type="match status" value="1"/>
</dbReference>
<dbReference type="PROSITE" id="PS00373">
    <property type="entry name" value="GART"/>
    <property type="match status" value="1"/>
</dbReference>
<sequence>MSESLRIIFAGTPDFAARHLDALLSSGHNVVGVFTQPDRPAGRGKKLMPSPVKVLAEEKGLPVFQPVSLRPQENQQLVADLQADVMVVVAYGLILPKAVLEMPRLGCINVHGSLLPRWRGAAPIQRSLWAGDAETGVTIMQMDVGLDTGDMLYKLSSPITAEDTSGTLYDKLAELGPQGLITTLKQLADGTAKPEVQDETLVTYAEKLSKEEARIDWSLSAAQLERCIRAFNPWPMSWLEIEGQPVKVWKASVIDTVTKSAPGTILEASKQGIQVATGDGILNLLSLQPAGKKAMSAQDLLNSRREWFVPGNRLA</sequence>
<name>FMT_ECOSM</name>
<organism>
    <name type="scientific">Escherichia coli (strain SMS-3-5 / SECEC)</name>
    <dbReference type="NCBI Taxonomy" id="439855"/>
    <lineage>
        <taxon>Bacteria</taxon>
        <taxon>Pseudomonadati</taxon>
        <taxon>Pseudomonadota</taxon>
        <taxon>Gammaproteobacteria</taxon>
        <taxon>Enterobacterales</taxon>
        <taxon>Enterobacteriaceae</taxon>
        <taxon>Escherichia</taxon>
    </lineage>
</organism>
<gene>
    <name evidence="1" type="primary">fmt</name>
    <name type="ordered locus">EcSMS35_3583</name>
</gene>